<organism>
    <name type="scientific">Oryza sativa subsp. indica</name>
    <name type="common">Rice</name>
    <dbReference type="NCBI Taxonomy" id="39946"/>
    <lineage>
        <taxon>Eukaryota</taxon>
        <taxon>Viridiplantae</taxon>
        <taxon>Streptophyta</taxon>
        <taxon>Embryophyta</taxon>
        <taxon>Tracheophyta</taxon>
        <taxon>Spermatophyta</taxon>
        <taxon>Magnoliopsida</taxon>
        <taxon>Liliopsida</taxon>
        <taxon>Poales</taxon>
        <taxon>Poaceae</taxon>
        <taxon>BOP clade</taxon>
        <taxon>Oryzoideae</taxon>
        <taxon>Oryzeae</taxon>
        <taxon>Oryzinae</taxon>
        <taxon>Oryza</taxon>
        <taxon>Oryza sativa</taxon>
    </lineage>
</organism>
<reference key="1">
    <citation type="journal article" date="2002" name="Nature">
        <title>Sequence and analysis of rice chromosome 4.</title>
        <authorList>
            <person name="Feng Q."/>
            <person name="Zhang Y."/>
            <person name="Hao P."/>
            <person name="Wang S."/>
            <person name="Fu G."/>
            <person name="Huang Y."/>
            <person name="Li Y."/>
            <person name="Zhu J."/>
            <person name="Liu Y."/>
            <person name="Hu X."/>
            <person name="Jia P."/>
            <person name="Zhang Y."/>
            <person name="Zhao Q."/>
            <person name="Ying K."/>
            <person name="Yu S."/>
            <person name="Tang Y."/>
            <person name="Weng Q."/>
            <person name="Zhang L."/>
            <person name="Lu Y."/>
            <person name="Mu J."/>
            <person name="Lu Y."/>
            <person name="Zhang L.S."/>
            <person name="Yu Z."/>
            <person name="Fan D."/>
            <person name="Liu X."/>
            <person name="Lu T."/>
            <person name="Li C."/>
            <person name="Wu Y."/>
            <person name="Sun T."/>
            <person name="Lei H."/>
            <person name="Li T."/>
            <person name="Hu H."/>
            <person name="Guan J."/>
            <person name="Wu M."/>
            <person name="Zhang R."/>
            <person name="Zhou B."/>
            <person name="Chen Z."/>
            <person name="Chen L."/>
            <person name="Jin Z."/>
            <person name="Wang R."/>
            <person name="Yin H."/>
            <person name="Cai Z."/>
            <person name="Ren S."/>
            <person name="Lv G."/>
            <person name="Gu W."/>
            <person name="Zhu G."/>
            <person name="Tu Y."/>
            <person name="Jia J."/>
            <person name="Zhang Y."/>
            <person name="Chen J."/>
            <person name="Kang H."/>
            <person name="Chen X."/>
            <person name="Shao C."/>
            <person name="Sun Y."/>
            <person name="Hu Q."/>
            <person name="Zhang X."/>
            <person name="Zhang W."/>
            <person name="Wang L."/>
            <person name="Ding C."/>
            <person name="Sheng H."/>
            <person name="Gu J."/>
            <person name="Chen S."/>
            <person name="Ni L."/>
            <person name="Zhu F."/>
            <person name="Chen W."/>
            <person name="Lan L."/>
            <person name="Lai Y."/>
            <person name="Cheng Z."/>
            <person name="Gu M."/>
            <person name="Jiang J."/>
            <person name="Li J."/>
            <person name="Hong G."/>
            <person name="Xue Y."/>
            <person name="Han B."/>
        </authorList>
    </citation>
    <scope>NUCLEOTIDE SEQUENCE [LARGE SCALE GENOMIC DNA]</scope>
    <source>
        <strain>cv. Guang-Lu-Ai No.4</strain>
    </source>
</reference>
<reference key="2">
    <citation type="journal article" date="2005" name="PLoS Biol.">
        <title>The genomes of Oryza sativa: a history of duplications.</title>
        <authorList>
            <person name="Yu J."/>
            <person name="Wang J."/>
            <person name="Lin W."/>
            <person name="Li S."/>
            <person name="Li H."/>
            <person name="Zhou J."/>
            <person name="Ni P."/>
            <person name="Dong W."/>
            <person name="Hu S."/>
            <person name="Zeng C."/>
            <person name="Zhang J."/>
            <person name="Zhang Y."/>
            <person name="Li R."/>
            <person name="Xu Z."/>
            <person name="Li S."/>
            <person name="Li X."/>
            <person name="Zheng H."/>
            <person name="Cong L."/>
            <person name="Lin L."/>
            <person name="Yin J."/>
            <person name="Geng J."/>
            <person name="Li G."/>
            <person name="Shi J."/>
            <person name="Liu J."/>
            <person name="Lv H."/>
            <person name="Li J."/>
            <person name="Wang J."/>
            <person name="Deng Y."/>
            <person name="Ran L."/>
            <person name="Shi X."/>
            <person name="Wang X."/>
            <person name="Wu Q."/>
            <person name="Li C."/>
            <person name="Ren X."/>
            <person name="Wang J."/>
            <person name="Wang X."/>
            <person name="Li D."/>
            <person name="Liu D."/>
            <person name="Zhang X."/>
            <person name="Ji Z."/>
            <person name="Zhao W."/>
            <person name="Sun Y."/>
            <person name="Zhang Z."/>
            <person name="Bao J."/>
            <person name="Han Y."/>
            <person name="Dong L."/>
            <person name="Ji J."/>
            <person name="Chen P."/>
            <person name="Wu S."/>
            <person name="Liu J."/>
            <person name="Xiao Y."/>
            <person name="Bu D."/>
            <person name="Tan J."/>
            <person name="Yang L."/>
            <person name="Ye C."/>
            <person name="Zhang J."/>
            <person name="Xu J."/>
            <person name="Zhou Y."/>
            <person name="Yu Y."/>
            <person name="Zhang B."/>
            <person name="Zhuang S."/>
            <person name="Wei H."/>
            <person name="Liu B."/>
            <person name="Lei M."/>
            <person name="Yu H."/>
            <person name="Li Y."/>
            <person name="Xu H."/>
            <person name="Wei S."/>
            <person name="He X."/>
            <person name="Fang L."/>
            <person name="Zhang Z."/>
            <person name="Zhang Y."/>
            <person name="Huang X."/>
            <person name="Su Z."/>
            <person name="Tong W."/>
            <person name="Li J."/>
            <person name="Tong Z."/>
            <person name="Li S."/>
            <person name="Ye J."/>
            <person name="Wang L."/>
            <person name="Fang L."/>
            <person name="Lei T."/>
            <person name="Chen C.-S."/>
            <person name="Chen H.-C."/>
            <person name="Xu Z."/>
            <person name="Li H."/>
            <person name="Huang H."/>
            <person name="Zhang F."/>
            <person name="Xu H."/>
            <person name="Li N."/>
            <person name="Zhao C."/>
            <person name="Li S."/>
            <person name="Dong L."/>
            <person name="Huang Y."/>
            <person name="Li L."/>
            <person name="Xi Y."/>
            <person name="Qi Q."/>
            <person name="Li W."/>
            <person name="Zhang B."/>
            <person name="Hu W."/>
            <person name="Zhang Y."/>
            <person name="Tian X."/>
            <person name="Jiao Y."/>
            <person name="Liang X."/>
            <person name="Jin J."/>
            <person name="Gao L."/>
            <person name="Zheng W."/>
            <person name="Hao B."/>
            <person name="Liu S.-M."/>
            <person name="Wang W."/>
            <person name="Yuan L."/>
            <person name="Cao M."/>
            <person name="McDermott J."/>
            <person name="Samudrala R."/>
            <person name="Wang J."/>
            <person name="Wong G.K.-S."/>
            <person name="Yang H."/>
        </authorList>
    </citation>
    <scope>NUCLEOTIDE SEQUENCE [LARGE SCALE GENOMIC DNA]</scope>
    <source>
        <strain>cv. 93-11</strain>
    </source>
</reference>
<name>MRS2D_ORYSI</name>
<comment type="function">
    <text evidence="1">Putative magnesium transporter.</text>
</comment>
<comment type="subcellular location">
    <subcellularLocation>
        <location evidence="1">Membrane</location>
        <topology evidence="1">Multi-pass membrane protein</topology>
    </subcellularLocation>
</comment>
<comment type="similarity">
    <text evidence="4">Belongs to the CorA metal ion transporter (MIT) (TC 1.A.35.5) family.</text>
</comment>
<comment type="caution">
    <text evidence="4">Lacks the GMN motif, which is a conserved feature of the family.</text>
</comment>
<comment type="sequence caution" evidence="4">
    <conflict type="erroneous gene model prediction">
        <sequence resource="EMBL-CDS" id="EAY94161"/>
    </conflict>
</comment>
<dbReference type="EMBL" id="CR855163">
    <property type="protein sequence ID" value="CAH67006.1"/>
    <property type="molecule type" value="Genomic_DNA"/>
</dbReference>
<dbReference type="EMBL" id="CM000129">
    <property type="protein sequence ID" value="EAY94161.1"/>
    <property type="status" value="ALT_SEQ"/>
    <property type="molecule type" value="Genomic_DNA"/>
</dbReference>
<dbReference type="SMR" id="Q01JR9"/>
<dbReference type="HOGENOM" id="CLU_034694_0_0_1"/>
<dbReference type="Proteomes" id="UP000007015">
    <property type="component" value="Chromosome 4"/>
</dbReference>
<dbReference type="GO" id="GO:0016020">
    <property type="term" value="C:membrane"/>
    <property type="evidence" value="ECO:0007669"/>
    <property type="project" value="UniProtKB-SubCell"/>
</dbReference>
<dbReference type="GO" id="GO:0015095">
    <property type="term" value="F:magnesium ion transmembrane transporter activity"/>
    <property type="evidence" value="ECO:0007669"/>
    <property type="project" value="TreeGrafter"/>
</dbReference>
<dbReference type="CDD" id="cd12823">
    <property type="entry name" value="Mrs2_Mfm1p-like"/>
    <property type="match status" value="1"/>
</dbReference>
<dbReference type="FunFam" id="2.40.128.330:FF:000007">
    <property type="entry name" value="Putative magnesium transporter MRS2-D"/>
    <property type="match status" value="1"/>
</dbReference>
<dbReference type="Gene3D" id="2.40.128.330">
    <property type="match status" value="1"/>
</dbReference>
<dbReference type="Gene3D" id="1.20.58.340">
    <property type="entry name" value="Magnesium transport protein CorA, transmembrane region"/>
    <property type="match status" value="1"/>
</dbReference>
<dbReference type="InterPro" id="IPR039204">
    <property type="entry name" value="MRS2-like"/>
</dbReference>
<dbReference type="PANTHER" id="PTHR13890:SF7">
    <property type="entry name" value="MAGNESIUM TRANSPORTER MRS2-D-RELATED"/>
    <property type="match status" value="1"/>
</dbReference>
<dbReference type="PANTHER" id="PTHR13890">
    <property type="entry name" value="RNA SPLICING PROTEIN MRS2, MITOCHONDRIAL"/>
    <property type="match status" value="1"/>
</dbReference>
<dbReference type="Pfam" id="PF22099">
    <property type="entry name" value="MRS2-like"/>
    <property type="match status" value="3"/>
</dbReference>
<keyword id="KW-0406">Ion transport</keyword>
<keyword id="KW-0460">Magnesium</keyword>
<keyword id="KW-0472">Membrane</keyword>
<keyword id="KW-1185">Reference proteome</keyword>
<keyword id="KW-0812">Transmembrane</keyword>
<keyword id="KW-1133">Transmembrane helix</keyword>
<keyword id="KW-0813">Transport</keyword>
<proteinExistence type="inferred from homology"/>
<protein>
    <recommendedName>
        <fullName>Putative magnesium transporter MRS2-D</fullName>
    </recommendedName>
</protein>
<accession>Q01JR9</accession>
<accession>A2XTK1</accession>
<feature type="chain" id="PRO_0000394272" description="Putative magnesium transporter MRS2-D">
    <location>
        <begin position="1"/>
        <end position="434"/>
    </location>
</feature>
<feature type="transmembrane region" description="Helical" evidence="2">
    <location>
        <begin position="367"/>
        <end position="387"/>
    </location>
</feature>
<feature type="transmembrane region" description="Helical" evidence="2">
    <location>
        <begin position="405"/>
        <end position="425"/>
    </location>
</feature>
<feature type="region of interest" description="Disordered" evidence="3">
    <location>
        <begin position="1"/>
        <end position="21"/>
    </location>
</feature>
<feature type="region of interest" description="Disordered" evidence="3">
    <location>
        <begin position="126"/>
        <end position="171"/>
    </location>
</feature>
<feature type="region of interest" description="Disordered" evidence="3">
    <location>
        <begin position="279"/>
        <end position="311"/>
    </location>
</feature>
<feature type="compositionally biased region" description="Low complexity" evidence="3">
    <location>
        <begin position="9"/>
        <end position="21"/>
    </location>
</feature>
<feature type="compositionally biased region" description="Basic and acidic residues" evidence="3">
    <location>
        <begin position="279"/>
        <end position="291"/>
    </location>
</feature>
<feature type="sequence conflict" description="In Ref. 2; EAY94161." evidence="4" ref="2">
    <original>P</original>
    <variation>A</variation>
    <location>
        <position position="23"/>
    </location>
</feature>
<feature type="sequence conflict" description="In Ref. 2; EAY94161." evidence="4" ref="2">
    <original>Q</original>
    <variation>P</variation>
    <location>
        <position position="154"/>
    </location>
</feature>
<feature type="sequence conflict" description="In Ref. 2; EAY94161." evidence="4" ref="2">
    <original>T</original>
    <variation>S</variation>
    <location>
        <position position="216"/>
    </location>
</feature>
<evidence type="ECO:0000250" key="1"/>
<evidence type="ECO:0000255" key="2"/>
<evidence type="ECO:0000256" key="3">
    <source>
        <dbReference type="SAM" id="MobiDB-lite"/>
    </source>
</evidence>
<evidence type="ECO:0000305" key="4"/>
<sequence length="434" mass="45581">MAARRRHVAAGAGAPAPAAGEWPAVTAGGGAAWALSPVEEVGTKQELMRRTGLPPRDLRALDPALSSAASASSCRPSAITGRDRAVVVNLDRARAVITASEVLVPSPRDPAVAPLVRELRARLALAASPTPAPSPSPPQHGMAVGMDGSISPSQASRGGEEAAGNGKDGEALGGGDKALPFEFRALEVCLEFACKSLEHETCTLEKEAYPALDELTSKVSTLNLERVRQIKSRLVAISGKVQKVRDELEHLLDDDMDMAALHLTEKLAYQSSRFDIDKEASELEDHSSRDEEGVEGGGGGDGDDETIAGGGSFSPNTDELEILLESYFVQIDGTLNSLSTLREYVEDTEDYINMMLDEKQNQLLQMGILLSTGTLVSSCAIAVTGVFGINVHISLYDSPASSAAFPCAAAGIVAGSLALYLAALLCYKRAGILQ</sequence>
<gene>
    <name type="primary">MRS2-D</name>
    <name type="ORF">OsI_15936</name>
    <name type="ORF">OSIGBa0160I14.4</name>
</gene>